<dbReference type="EMBL" id="DQ181918">
    <property type="protein sequence ID" value="ABA60130.1"/>
    <property type="molecule type" value="mRNA"/>
</dbReference>
<dbReference type="SMR" id="Q3HXX7"/>
<dbReference type="GO" id="GO:0030424">
    <property type="term" value="C:axon"/>
    <property type="evidence" value="ECO:0007669"/>
    <property type="project" value="TreeGrafter"/>
</dbReference>
<dbReference type="GO" id="GO:0030425">
    <property type="term" value="C:dendrite"/>
    <property type="evidence" value="ECO:0007669"/>
    <property type="project" value="TreeGrafter"/>
</dbReference>
<dbReference type="GO" id="GO:0005615">
    <property type="term" value="C:extracellular space"/>
    <property type="evidence" value="ECO:0007669"/>
    <property type="project" value="TreeGrafter"/>
</dbReference>
<dbReference type="GO" id="GO:0008021">
    <property type="term" value="C:synaptic vesicle"/>
    <property type="evidence" value="ECO:0007669"/>
    <property type="project" value="TreeGrafter"/>
</dbReference>
<dbReference type="GO" id="GO:0008083">
    <property type="term" value="F:growth factor activity"/>
    <property type="evidence" value="ECO:0007669"/>
    <property type="project" value="UniProtKB-KW"/>
</dbReference>
<dbReference type="GO" id="GO:0008289">
    <property type="term" value="F:lipid binding"/>
    <property type="evidence" value="ECO:0007669"/>
    <property type="project" value="UniProtKB-KW"/>
</dbReference>
<dbReference type="GO" id="GO:0008191">
    <property type="term" value="F:metalloendopeptidase inhibitor activity"/>
    <property type="evidence" value="ECO:0000250"/>
    <property type="project" value="UniProtKB"/>
</dbReference>
<dbReference type="GO" id="GO:0005163">
    <property type="term" value="F:nerve growth factor receptor binding"/>
    <property type="evidence" value="ECO:0007669"/>
    <property type="project" value="TreeGrafter"/>
</dbReference>
<dbReference type="GO" id="GO:0090729">
    <property type="term" value="F:toxin activity"/>
    <property type="evidence" value="ECO:0007669"/>
    <property type="project" value="UniProtKB-KW"/>
</dbReference>
<dbReference type="GO" id="GO:0007169">
    <property type="term" value="P:cell surface receptor protein tyrosine kinase signaling pathway"/>
    <property type="evidence" value="ECO:0007669"/>
    <property type="project" value="TreeGrafter"/>
</dbReference>
<dbReference type="GO" id="GO:0050804">
    <property type="term" value="P:modulation of chemical synaptic transmission"/>
    <property type="evidence" value="ECO:0007669"/>
    <property type="project" value="TreeGrafter"/>
</dbReference>
<dbReference type="GO" id="GO:0043524">
    <property type="term" value="P:negative regulation of neuron apoptotic process"/>
    <property type="evidence" value="ECO:0007669"/>
    <property type="project" value="TreeGrafter"/>
</dbReference>
<dbReference type="GO" id="GO:0021675">
    <property type="term" value="P:nerve development"/>
    <property type="evidence" value="ECO:0007669"/>
    <property type="project" value="TreeGrafter"/>
</dbReference>
<dbReference type="GO" id="GO:0038180">
    <property type="term" value="P:nerve growth factor signaling pathway"/>
    <property type="evidence" value="ECO:0007669"/>
    <property type="project" value="TreeGrafter"/>
</dbReference>
<dbReference type="GO" id="GO:0048812">
    <property type="term" value="P:neuron projection morphogenesis"/>
    <property type="evidence" value="ECO:0007669"/>
    <property type="project" value="TreeGrafter"/>
</dbReference>
<dbReference type="FunFam" id="2.10.90.10:FF:000002">
    <property type="entry name" value="Brain-derived neurotrophic factor"/>
    <property type="match status" value="1"/>
</dbReference>
<dbReference type="Gene3D" id="2.10.90.10">
    <property type="entry name" value="Cystine-knot cytokines"/>
    <property type="match status" value="1"/>
</dbReference>
<dbReference type="InterPro" id="IPR029034">
    <property type="entry name" value="Cystine-knot_cytokine"/>
</dbReference>
<dbReference type="InterPro" id="IPR020408">
    <property type="entry name" value="Nerve_growth_factor-like"/>
</dbReference>
<dbReference type="InterPro" id="IPR002072">
    <property type="entry name" value="Nerve_growth_factor-rel"/>
</dbReference>
<dbReference type="InterPro" id="IPR020425">
    <property type="entry name" value="Nerve_growth_factor_bsu"/>
</dbReference>
<dbReference type="InterPro" id="IPR019846">
    <property type="entry name" value="Nerve_growth_factor_CS"/>
</dbReference>
<dbReference type="InterPro" id="IPR020433">
    <property type="entry name" value="Venom_nerve_growth_factor"/>
</dbReference>
<dbReference type="PANTHER" id="PTHR11589:SF10">
    <property type="entry name" value="BETA-NERVE GROWTH FACTOR"/>
    <property type="match status" value="1"/>
</dbReference>
<dbReference type="PANTHER" id="PTHR11589">
    <property type="entry name" value="NERVE GROWTH FACTOR NGF -RELATED"/>
    <property type="match status" value="1"/>
</dbReference>
<dbReference type="Pfam" id="PF00243">
    <property type="entry name" value="NGF"/>
    <property type="match status" value="1"/>
</dbReference>
<dbReference type="PIRSF" id="PIRSF001789">
    <property type="entry name" value="NGF"/>
    <property type="match status" value="1"/>
</dbReference>
<dbReference type="PRINTS" id="PR00268">
    <property type="entry name" value="NGF"/>
</dbReference>
<dbReference type="PRINTS" id="PR01913">
    <property type="entry name" value="NGFBETA"/>
</dbReference>
<dbReference type="PRINTS" id="PR01917">
    <property type="entry name" value="VENOMNGF"/>
</dbReference>
<dbReference type="SMART" id="SM00140">
    <property type="entry name" value="NGF"/>
    <property type="match status" value="1"/>
</dbReference>
<dbReference type="SUPFAM" id="SSF57501">
    <property type="entry name" value="Cystine-knot cytokines"/>
    <property type="match status" value="1"/>
</dbReference>
<dbReference type="PROSITE" id="PS00248">
    <property type="entry name" value="NGF_1"/>
    <property type="match status" value="1"/>
</dbReference>
<dbReference type="PROSITE" id="PS50270">
    <property type="entry name" value="NGF_2"/>
    <property type="match status" value="1"/>
</dbReference>
<keyword id="KW-0165">Cleavage on pair of basic residues</keyword>
<keyword id="KW-1015">Disulfide bond</keyword>
<keyword id="KW-0339">Growth factor</keyword>
<keyword id="KW-0446">Lipid-binding</keyword>
<keyword id="KW-0481">Metalloenzyme inhibitor</keyword>
<keyword id="KW-0483">Metalloprotease inhibitor</keyword>
<keyword id="KW-0646">Protease inhibitor</keyword>
<keyword id="KW-0964">Secreted</keyword>
<keyword id="KW-0732">Signal</keyword>
<keyword id="KW-0800">Toxin</keyword>
<accession>Q3HXX7</accession>
<comment type="function">
    <text evidence="2 3">Nerve growth factor is important for the development and maintenance of the sympathetic and sensory nervous systems. It stimulates division and differentiation of sympathetic and embryonic sensory neurons as well as basal forebrain cholinergic neurons in the brain. Its relevance in the snake venom is not clear. However, it has been shown to inhibit metalloproteinase-dependent proteolysis of platelet glycoprotein Ib alpha, suggesting a metalloproteinase inhibition to prevent metalloprotease autodigestion and/or protection against prey proteases (By similarity). Binds a lipid between the two protein chains in the homodimer. The lipid-bound form promotes histamine relase from mouse mast cells, contrary to the lipid-free form (By similarity).</text>
</comment>
<comment type="subunit">
    <text evidence="2">Homodimer; non-covalently linked.</text>
</comment>
<comment type="subcellular location">
    <subcellularLocation>
        <location evidence="2">Secreted</location>
    </subcellularLocation>
</comment>
<comment type="tissue specificity">
    <text>Expressed by the venom gland.</text>
</comment>
<comment type="similarity">
    <text evidence="6">Belongs to the NGF-beta family.</text>
</comment>
<sequence>MSMLCYTLIIAFLIGTWAAPKSEDNVPLGSPATSDLSDTSCAQTHEGLKTSRNTDQRHPAPKKAEDQELGSVANIIVDPKLFQKRRFQSSRVLFSTQPPPLSRDEQSVEFLDNEDTLNRNIRAKRENHPVHNQGEHSVCDSVSDWVIKTTATDIRGNVVTVMEDINLNNEVYKQYFFETKCRNPSPNPVQSECRGIDSRLWNSYCTTTQTFVRALTMEGNQASWRFIRIDTACVCVIIRKTDNF</sequence>
<evidence type="ECO:0000250" key="1"/>
<evidence type="ECO:0000250" key="2">
    <source>
        <dbReference type="UniProtKB" id="P61898"/>
    </source>
</evidence>
<evidence type="ECO:0000250" key="3">
    <source>
        <dbReference type="UniProtKB" id="P61899"/>
    </source>
</evidence>
<evidence type="ECO:0000255" key="4"/>
<evidence type="ECO:0000256" key="5">
    <source>
        <dbReference type="SAM" id="MobiDB-lite"/>
    </source>
</evidence>
<evidence type="ECO:0000305" key="6"/>
<feature type="signal peptide" evidence="4">
    <location>
        <begin position="1"/>
        <end position="18"/>
    </location>
</feature>
<feature type="propeptide" id="PRO_0000043319" evidence="1">
    <location>
        <begin position="19"/>
        <end position="125"/>
    </location>
</feature>
<feature type="chain" id="PRO_0000043320" description="Venom nerve growth factor 2">
    <location>
        <begin position="126"/>
        <end position="244"/>
    </location>
</feature>
<feature type="region of interest" description="Disordered" evidence="5">
    <location>
        <begin position="47"/>
        <end position="67"/>
    </location>
</feature>
<feature type="compositionally biased region" description="Basic and acidic residues" evidence="5">
    <location>
        <begin position="47"/>
        <end position="66"/>
    </location>
</feature>
<feature type="disulfide bond" evidence="2">
    <location>
        <begin position="139"/>
        <end position="205"/>
    </location>
</feature>
<feature type="disulfide bond" evidence="2">
    <location>
        <begin position="181"/>
        <end position="233"/>
    </location>
</feature>
<feature type="disulfide bond" evidence="2">
    <location>
        <begin position="193"/>
        <end position="235"/>
    </location>
</feature>
<organism>
    <name type="scientific">Tropidechis carinatus</name>
    <name type="common">Australian rough-scaled snake</name>
    <dbReference type="NCBI Taxonomy" id="100989"/>
    <lineage>
        <taxon>Eukaryota</taxon>
        <taxon>Metazoa</taxon>
        <taxon>Chordata</taxon>
        <taxon>Craniata</taxon>
        <taxon>Vertebrata</taxon>
        <taxon>Euteleostomi</taxon>
        <taxon>Lepidosauria</taxon>
        <taxon>Squamata</taxon>
        <taxon>Bifurcata</taxon>
        <taxon>Unidentata</taxon>
        <taxon>Episquamata</taxon>
        <taxon>Toxicofera</taxon>
        <taxon>Serpentes</taxon>
        <taxon>Colubroidea</taxon>
        <taxon>Elapidae</taxon>
        <taxon>Notechinae</taxon>
        <taxon>Tropidechis</taxon>
    </lineage>
</organism>
<name>NGFV2_TROCA</name>
<reference key="1">
    <citation type="submission" date="2005-08" db="EMBL/GenBank/DDBJ databases">
        <title>Identification of nerve growth factor as a ubiquitous component of Australian elapid snake venoms.</title>
        <authorList>
            <person name="Earl S.T.H."/>
            <person name="St Pierre L."/>
            <person name="Birrell G.W."/>
            <person name="Wallis T.P."/>
            <person name="Masci P.P."/>
            <person name="de Jersey J."/>
            <person name="Gorman J.J."/>
            <person name="Lavin M.F."/>
        </authorList>
    </citation>
    <scope>NUCLEOTIDE SEQUENCE [MRNA]</scope>
    <source>
        <tissue>Venom gland</tissue>
    </source>
</reference>
<proteinExistence type="evidence at transcript level"/>
<protein>
    <recommendedName>
        <fullName>Venom nerve growth factor 2</fullName>
        <shortName>v-NGF-2</shortName>
        <shortName>vNGF-2</shortName>
    </recommendedName>
</protein>